<organism>
    <name type="scientific">Dictyostelium discoideum</name>
    <name type="common">Social amoeba</name>
    <dbReference type="NCBI Taxonomy" id="44689"/>
    <lineage>
        <taxon>Eukaryota</taxon>
        <taxon>Amoebozoa</taxon>
        <taxon>Evosea</taxon>
        <taxon>Eumycetozoa</taxon>
        <taxon>Dictyostelia</taxon>
        <taxon>Dictyosteliales</taxon>
        <taxon>Dictyosteliaceae</taxon>
        <taxon>Dictyostelium</taxon>
    </lineage>
</organism>
<dbReference type="EMBL" id="AAFI02000070">
    <property type="protein sequence ID" value="EAL65129.2"/>
    <property type="molecule type" value="Genomic_DNA"/>
</dbReference>
<dbReference type="RefSeq" id="XP_638436.2">
    <property type="nucleotide sequence ID" value="XM_633344.2"/>
</dbReference>
<dbReference type="FunCoup" id="Q54PD9">
    <property type="interactions" value="37"/>
</dbReference>
<dbReference type="STRING" id="44689.Q54PD9"/>
<dbReference type="PaxDb" id="44689-DDB0266840"/>
<dbReference type="EnsemblProtists" id="EAL65129">
    <property type="protein sequence ID" value="EAL65129"/>
    <property type="gene ID" value="DDB_G0284719"/>
</dbReference>
<dbReference type="GeneID" id="8624686"/>
<dbReference type="KEGG" id="ddi:DDB_G0284719"/>
<dbReference type="dictyBase" id="DDB_G0284719">
    <property type="gene designation" value="med29"/>
</dbReference>
<dbReference type="VEuPathDB" id="AmoebaDB:DDB_G0284719"/>
<dbReference type="HOGENOM" id="CLU_492137_0_0_1"/>
<dbReference type="InParanoid" id="Q54PD9"/>
<dbReference type="OMA" id="KEQHQCR"/>
<dbReference type="PRO" id="PR:Q54PD9"/>
<dbReference type="Proteomes" id="UP000002195">
    <property type="component" value="Chromosome 4"/>
</dbReference>
<dbReference type="GO" id="GO:0016592">
    <property type="term" value="C:mediator complex"/>
    <property type="evidence" value="ECO:0000250"/>
    <property type="project" value="dictyBase"/>
</dbReference>
<dbReference type="GO" id="GO:0006366">
    <property type="term" value="P:transcription by RNA polymerase II"/>
    <property type="evidence" value="ECO:0000250"/>
    <property type="project" value="dictyBase"/>
</dbReference>
<gene>
    <name type="primary">med29</name>
    <name type="synonym">med2</name>
    <name type="ORF">DDB_G0284719</name>
</gene>
<comment type="function">
    <text evidence="1">Component of the Mediator complex, a coactivator involved in the regulated transcription of nearly all RNA polymerase II-dependent genes. Mediator functions as a bridge to convey information from gene-specific regulatory proteins to the basal RNA polymerase II transcription machinery. Mediator is recruited to promoters by direct interactions with regulatory proteins and serves as a scaffold for the assembly of a functional preinitiation complex with RNA polymerase II and the general transcription factors (By similarity).</text>
</comment>
<comment type="subunit">
    <text evidence="1">Component of the Mediator complex.</text>
</comment>
<comment type="subcellular location">
    <subcellularLocation>
        <location evidence="1">Nucleus</location>
    </subcellularLocation>
</comment>
<comment type="similarity">
    <text evidence="4">Belongs to the Mediator complex subunit 29 family.</text>
</comment>
<keyword id="KW-0010">Activator</keyword>
<keyword id="KW-0175">Coiled coil</keyword>
<keyword id="KW-0539">Nucleus</keyword>
<keyword id="KW-1185">Reference proteome</keyword>
<keyword id="KW-0804">Transcription</keyword>
<keyword id="KW-0805">Transcription regulation</keyword>
<name>MED29_DICDI</name>
<evidence type="ECO:0000250" key="1"/>
<evidence type="ECO:0000255" key="2"/>
<evidence type="ECO:0000256" key="3">
    <source>
        <dbReference type="SAM" id="MobiDB-lite"/>
    </source>
</evidence>
<evidence type="ECO:0000305" key="4"/>
<sequence length="554" mass="62653">MNLDSLSKIIKNKIQNVLYPTSKALLSSDDPSKRAETCYDLSQKIEEFELVCDELYGIIEIHKQNVIFSNINNGTHISKENNPEVLFNSLVSRLSTLRQTKSTMDSFAKEISIVQPIDNKANTNNNNNNNNNNNNNNNNNNNNNNNTNTNTNNTNNTNNTTNTNNTNNNNNNNYNNNNNNNNNNNNNNNNNNNNNNNNSINNSINNNSNNKVGSNDNPSTAPITENNTENNAGNTNNTNNNNNNNNNNNNNNNNNNNNNNNNTNQVAESSNISSNTTPPETTNIVNDPNSVSGGNLTNTEAPMEISDNSEIQHPQQEQQQQQQQQQQQQQQQQQQQQQPQEQIPQQQQPQLPMQQEQIQQLPQQQTPPSQQQPQQTPPLPQQFQQPLVNVNQITSPTLENQSISGNNNNNNDGQTISPQQQQEQLQLQMQQLQQLQMQQQQMNFNPTEPINTNFYNIDLQQPIQQQTLNNNNNNINSLENQINTNLGGNTFNTGTTPPLQQQPQPQQQQQINNPEINQIDDDNTMKETIDVDKIIEESNNVNNNVNNRQVIDLE</sequence>
<proteinExistence type="inferred from homology"/>
<accession>Q54PD9</accession>
<feature type="chain" id="PRO_0000350814" description="Putative mediator of RNA polymerase II transcription subunit 29">
    <location>
        <begin position="1"/>
        <end position="554"/>
    </location>
</feature>
<feature type="region of interest" description="Disordered" evidence="3">
    <location>
        <begin position="118"/>
        <end position="301"/>
    </location>
</feature>
<feature type="region of interest" description="Disordered" evidence="3">
    <location>
        <begin position="330"/>
        <end position="381"/>
    </location>
</feature>
<feature type="region of interest" description="Disordered" evidence="3">
    <location>
        <begin position="398"/>
        <end position="428"/>
    </location>
</feature>
<feature type="region of interest" description="Disordered" evidence="3">
    <location>
        <begin position="483"/>
        <end position="524"/>
    </location>
</feature>
<feature type="coiled-coil region" evidence="2">
    <location>
        <begin position="167"/>
        <end position="194"/>
    </location>
</feature>
<feature type="coiled-coil region" evidence="2">
    <location>
        <begin position="419"/>
        <end position="486"/>
    </location>
</feature>
<feature type="compositionally biased region" description="Low complexity" evidence="3">
    <location>
        <begin position="122"/>
        <end position="210"/>
    </location>
</feature>
<feature type="compositionally biased region" description="Polar residues" evidence="3">
    <location>
        <begin position="211"/>
        <end position="225"/>
    </location>
</feature>
<feature type="compositionally biased region" description="Low complexity" evidence="3">
    <location>
        <begin position="226"/>
        <end position="264"/>
    </location>
</feature>
<feature type="compositionally biased region" description="Polar residues" evidence="3">
    <location>
        <begin position="265"/>
        <end position="300"/>
    </location>
</feature>
<feature type="compositionally biased region" description="Low complexity" evidence="3">
    <location>
        <begin position="330"/>
        <end position="374"/>
    </location>
</feature>
<feature type="compositionally biased region" description="Low complexity" evidence="3">
    <location>
        <begin position="419"/>
        <end position="428"/>
    </location>
</feature>
<feature type="compositionally biased region" description="Low complexity" evidence="3">
    <location>
        <begin position="483"/>
        <end position="517"/>
    </location>
</feature>
<reference key="1">
    <citation type="journal article" date="2005" name="Nature">
        <title>The genome of the social amoeba Dictyostelium discoideum.</title>
        <authorList>
            <person name="Eichinger L."/>
            <person name="Pachebat J.A."/>
            <person name="Gloeckner G."/>
            <person name="Rajandream M.A."/>
            <person name="Sucgang R."/>
            <person name="Berriman M."/>
            <person name="Song J."/>
            <person name="Olsen R."/>
            <person name="Szafranski K."/>
            <person name="Xu Q."/>
            <person name="Tunggal B."/>
            <person name="Kummerfeld S."/>
            <person name="Madera M."/>
            <person name="Konfortov B.A."/>
            <person name="Rivero F."/>
            <person name="Bankier A.T."/>
            <person name="Lehmann R."/>
            <person name="Hamlin N."/>
            <person name="Davies R."/>
            <person name="Gaudet P."/>
            <person name="Fey P."/>
            <person name="Pilcher K."/>
            <person name="Chen G."/>
            <person name="Saunders D."/>
            <person name="Sodergren E.J."/>
            <person name="Davis P."/>
            <person name="Kerhornou A."/>
            <person name="Nie X."/>
            <person name="Hall N."/>
            <person name="Anjard C."/>
            <person name="Hemphill L."/>
            <person name="Bason N."/>
            <person name="Farbrother P."/>
            <person name="Desany B."/>
            <person name="Just E."/>
            <person name="Morio T."/>
            <person name="Rost R."/>
            <person name="Churcher C.M."/>
            <person name="Cooper J."/>
            <person name="Haydock S."/>
            <person name="van Driessche N."/>
            <person name="Cronin A."/>
            <person name="Goodhead I."/>
            <person name="Muzny D.M."/>
            <person name="Mourier T."/>
            <person name="Pain A."/>
            <person name="Lu M."/>
            <person name="Harper D."/>
            <person name="Lindsay R."/>
            <person name="Hauser H."/>
            <person name="James K.D."/>
            <person name="Quiles M."/>
            <person name="Madan Babu M."/>
            <person name="Saito T."/>
            <person name="Buchrieser C."/>
            <person name="Wardroper A."/>
            <person name="Felder M."/>
            <person name="Thangavelu M."/>
            <person name="Johnson D."/>
            <person name="Knights A."/>
            <person name="Loulseged H."/>
            <person name="Mungall K.L."/>
            <person name="Oliver K."/>
            <person name="Price C."/>
            <person name="Quail M.A."/>
            <person name="Urushihara H."/>
            <person name="Hernandez J."/>
            <person name="Rabbinowitsch E."/>
            <person name="Steffen D."/>
            <person name="Sanders M."/>
            <person name="Ma J."/>
            <person name="Kohara Y."/>
            <person name="Sharp S."/>
            <person name="Simmonds M.N."/>
            <person name="Spiegler S."/>
            <person name="Tivey A."/>
            <person name="Sugano S."/>
            <person name="White B."/>
            <person name="Walker D."/>
            <person name="Woodward J.R."/>
            <person name="Winckler T."/>
            <person name="Tanaka Y."/>
            <person name="Shaulsky G."/>
            <person name="Schleicher M."/>
            <person name="Weinstock G.M."/>
            <person name="Rosenthal A."/>
            <person name="Cox E.C."/>
            <person name="Chisholm R.L."/>
            <person name="Gibbs R.A."/>
            <person name="Loomis W.F."/>
            <person name="Platzer M."/>
            <person name="Kay R.R."/>
            <person name="Williams J.G."/>
            <person name="Dear P.H."/>
            <person name="Noegel A.A."/>
            <person name="Barrell B.G."/>
            <person name="Kuspa A."/>
        </authorList>
    </citation>
    <scope>NUCLEOTIDE SEQUENCE [LARGE SCALE GENOMIC DNA]</scope>
    <source>
        <strain>AX4</strain>
    </source>
</reference>
<reference key="2">
    <citation type="journal article" date="2008" name="Nucleic Acids Res.">
        <title>Comparative genomics supports a deep evolutionary origin for the large, four-module transcriptional mediator complex.</title>
        <authorList>
            <person name="Bourbon H.-M."/>
        </authorList>
    </citation>
    <scope>NOMENCLATURE</scope>
</reference>
<protein>
    <recommendedName>
        <fullName>Putative mediator of RNA polymerase II transcription subunit 29</fullName>
    </recommendedName>
    <alternativeName>
        <fullName>Putative mediator complex subunit 2</fullName>
    </alternativeName>
    <alternativeName>
        <fullName>Putative mediator complex subunit 29</fullName>
    </alternativeName>
    <alternativeName>
        <fullName>Putative mediator of RNA polymerase II transcription subunit 2</fullName>
    </alternativeName>
</protein>